<name>EMAL5_MOUSE</name>
<keyword id="KW-0963">Cytoplasm</keyword>
<keyword id="KW-0206">Cytoskeleton</keyword>
<keyword id="KW-0493">Microtubule</keyword>
<keyword id="KW-1185">Reference proteome</keyword>
<keyword id="KW-0677">Repeat</keyword>
<keyword id="KW-0853">WD repeat</keyword>
<protein>
    <recommendedName>
        <fullName>Echinoderm microtubule-associated protein-like 5</fullName>
        <shortName>EMAP-5</shortName>
    </recommendedName>
</protein>
<organism>
    <name type="scientific">Mus musculus</name>
    <name type="common">Mouse</name>
    <dbReference type="NCBI Taxonomy" id="10090"/>
    <lineage>
        <taxon>Eukaryota</taxon>
        <taxon>Metazoa</taxon>
        <taxon>Chordata</taxon>
        <taxon>Craniata</taxon>
        <taxon>Vertebrata</taxon>
        <taxon>Euteleostomi</taxon>
        <taxon>Mammalia</taxon>
        <taxon>Eutheria</taxon>
        <taxon>Euarchontoglires</taxon>
        <taxon>Glires</taxon>
        <taxon>Rodentia</taxon>
        <taxon>Myomorpha</taxon>
        <taxon>Muroidea</taxon>
        <taxon>Muridae</taxon>
        <taxon>Murinae</taxon>
        <taxon>Mus</taxon>
        <taxon>Mus</taxon>
    </lineage>
</organism>
<reference key="1">
    <citation type="journal article" date="2009" name="PLoS Biol.">
        <title>Lineage-specific biology revealed by a finished genome assembly of the mouse.</title>
        <authorList>
            <person name="Church D.M."/>
            <person name="Goodstadt L."/>
            <person name="Hillier L.W."/>
            <person name="Zody M.C."/>
            <person name="Goldstein S."/>
            <person name="She X."/>
            <person name="Bult C.J."/>
            <person name="Agarwala R."/>
            <person name="Cherry J.L."/>
            <person name="DiCuccio M."/>
            <person name="Hlavina W."/>
            <person name="Kapustin Y."/>
            <person name="Meric P."/>
            <person name="Maglott D."/>
            <person name="Birtle Z."/>
            <person name="Marques A.C."/>
            <person name="Graves T."/>
            <person name="Zhou S."/>
            <person name="Teague B."/>
            <person name="Potamousis K."/>
            <person name="Churas C."/>
            <person name="Place M."/>
            <person name="Herschleb J."/>
            <person name="Runnheim R."/>
            <person name="Forrest D."/>
            <person name="Amos-Landgraf J."/>
            <person name="Schwartz D.C."/>
            <person name="Cheng Z."/>
            <person name="Lindblad-Toh K."/>
            <person name="Eichler E.E."/>
            <person name="Ponting C.P."/>
        </authorList>
    </citation>
    <scope>NUCLEOTIDE SEQUENCE [LARGE SCALE GENOMIC DNA]</scope>
    <source>
        <strain>C57BL/6J</strain>
    </source>
</reference>
<reference key="2">
    <citation type="journal article" date="2005" name="Science">
        <title>The transcriptional landscape of the mammalian genome.</title>
        <authorList>
            <person name="Carninci P."/>
            <person name="Kasukawa T."/>
            <person name="Katayama S."/>
            <person name="Gough J."/>
            <person name="Frith M.C."/>
            <person name="Maeda N."/>
            <person name="Oyama R."/>
            <person name="Ravasi T."/>
            <person name="Lenhard B."/>
            <person name="Wells C."/>
            <person name="Kodzius R."/>
            <person name="Shimokawa K."/>
            <person name="Bajic V.B."/>
            <person name="Brenner S.E."/>
            <person name="Batalov S."/>
            <person name="Forrest A.R."/>
            <person name="Zavolan M."/>
            <person name="Davis M.J."/>
            <person name="Wilming L.G."/>
            <person name="Aidinis V."/>
            <person name="Allen J.E."/>
            <person name="Ambesi-Impiombato A."/>
            <person name="Apweiler R."/>
            <person name="Aturaliya R.N."/>
            <person name="Bailey T.L."/>
            <person name="Bansal M."/>
            <person name="Baxter L."/>
            <person name="Beisel K.W."/>
            <person name="Bersano T."/>
            <person name="Bono H."/>
            <person name="Chalk A.M."/>
            <person name="Chiu K.P."/>
            <person name="Choudhary V."/>
            <person name="Christoffels A."/>
            <person name="Clutterbuck D.R."/>
            <person name="Crowe M.L."/>
            <person name="Dalla E."/>
            <person name="Dalrymple B.P."/>
            <person name="de Bono B."/>
            <person name="Della Gatta G."/>
            <person name="di Bernardo D."/>
            <person name="Down T."/>
            <person name="Engstrom P."/>
            <person name="Fagiolini M."/>
            <person name="Faulkner G."/>
            <person name="Fletcher C.F."/>
            <person name="Fukushima T."/>
            <person name="Furuno M."/>
            <person name="Futaki S."/>
            <person name="Gariboldi M."/>
            <person name="Georgii-Hemming P."/>
            <person name="Gingeras T.R."/>
            <person name="Gojobori T."/>
            <person name="Green R.E."/>
            <person name="Gustincich S."/>
            <person name="Harbers M."/>
            <person name="Hayashi Y."/>
            <person name="Hensch T.K."/>
            <person name="Hirokawa N."/>
            <person name="Hill D."/>
            <person name="Huminiecki L."/>
            <person name="Iacono M."/>
            <person name="Ikeo K."/>
            <person name="Iwama A."/>
            <person name="Ishikawa T."/>
            <person name="Jakt M."/>
            <person name="Kanapin A."/>
            <person name="Katoh M."/>
            <person name="Kawasawa Y."/>
            <person name="Kelso J."/>
            <person name="Kitamura H."/>
            <person name="Kitano H."/>
            <person name="Kollias G."/>
            <person name="Krishnan S.P."/>
            <person name="Kruger A."/>
            <person name="Kummerfeld S.K."/>
            <person name="Kurochkin I.V."/>
            <person name="Lareau L.F."/>
            <person name="Lazarevic D."/>
            <person name="Lipovich L."/>
            <person name="Liu J."/>
            <person name="Liuni S."/>
            <person name="McWilliam S."/>
            <person name="Madan Babu M."/>
            <person name="Madera M."/>
            <person name="Marchionni L."/>
            <person name="Matsuda H."/>
            <person name="Matsuzawa S."/>
            <person name="Miki H."/>
            <person name="Mignone F."/>
            <person name="Miyake S."/>
            <person name="Morris K."/>
            <person name="Mottagui-Tabar S."/>
            <person name="Mulder N."/>
            <person name="Nakano N."/>
            <person name="Nakauchi H."/>
            <person name="Ng P."/>
            <person name="Nilsson R."/>
            <person name="Nishiguchi S."/>
            <person name="Nishikawa S."/>
            <person name="Nori F."/>
            <person name="Ohara O."/>
            <person name="Okazaki Y."/>
            <person name="Orlando V."/>
            <person name="Pang K.C."/>
            <person name="Pavan W.J."/>
            <person name="Pavesi G."/>
            <person name="Pesole G."/>
            <person name="Petrovsky N."/>
            <person name="Piazza S."/>
            <person name="Reed J."/>
            <person name="Reid J.F."/>
            <person name="Ring B.Z."/>
            <person name="Ringwald M."/>
            <person name="Rost B."/>
            <person name="Ruan Y."/>
            <person name="Salzberg S.L."/>
            <person name="Sandelin A."/>
            <person name="Schneider C."/>
            <person name="Schoenbach C."/>
            <person name="Sekiguchi K."/>
            <person name="Semple C.A."/>
            <person name="Seno S."/>
            <person name="Sessa L."/>
            <person name="Sheng Y."/>
            <person name="Shibata Y."/>
            <person name="Shimada H."/>
            <person name="Shimada K."/>
            <person name="Silva D."/>
            <person name="Sinclair B."/>
            <person name="Sperling S."/>
            <person name="Stupka E."/>
            <person name="Sugiura K."/>
            <person name="Sultana R."/>
            <person name="Takenaka Y."/>
            <person name="Taki K."/>
            <person name="Tammoja K."/>
            <person name="Tan S.L."/>
            <person name="Tang S."/>
            <person name="Taylor M.S."/>
            <person name="Tegner J."/>
            <person name="Teichmann S.A."/>
            <person name="Ueda H.R."/>
            <person name="van Nimwegen E."/>
            <person name="Verardo R."/>
            <person name="Wei C.L."/>
            <person name="Yagi K."/>
            <person name="Yamanishi H."/>
            <person name="Zabarovsky E."/>
            <person name="Zhu S."/>
            <person name="Zimmer A."/>
            <person name="Hide W."/>
            <person name="Bult C."/>
            <person name="Grimmond S.M."/>
            <person name="Teasdale R.D."/>
            <person name="Liu E.T."/>
            <person name="Brusic V."/>
            <person name="Quackenbush J."/>
            <person name="Wahlestedt C."/>
            <person name="Mattick J.S."/>
            <person name="Hume D.A."/>
            <person name="Kai C."/>
            <person name="Sasaki D."/>
            <person name="Tomaru Y."/>
            <person name="Fukuda S."/>
            <person name="Kanamori-Katayama M."/>
            <person name="Suzuki M."/>
            <person name="Aoki J."/>
            <person name="Arakawa T."/>
            <person name="Iida J."/>
            <person name="Imamura K."/>
            <person name="Itoh M."/>
            <person name="Kato T."/>
            <person name="Kawaji H."/>
            <person name="Kawagashira N."/>
            <person name="Kawashima T."/>
            <person name="Kojima M."/>
            <person name="Kondo S."/>
            <person name="Konno H."/>
            <person name="Nakano K."/>
            <person name="Ninomiya N."/>
            <person name="Nishio T."/>
            <person name="Okada M."/>
            <person name="Plessy C."/>
            <person name="Shibata K."/>
            <person name="Shiraki T."/>
            <person name="Suzuki S."/>
            <person name="Tagami M."/>
            <person name="Waki K."/>
            <person name="Watahiki A."/>
            <person name="Okamura-Oho Y."/>
            <person name="Suzuki H."/>
            <person name="Kawai J."/>
            <person name="Hayashizaki Y."/>
        </authorList>
    </citation>
    <scope>NUCLEOTIDE SEQUENCE [LARGE SCALE MRNA] OF 16-488 AND 1648-1977</scope>
    <source>
        <strain>C57BL/6J</strain>
        <tissue>Brain cortex</tissue>
        <tissue>Corpus striatum</tissue>
    </source>
</reference>
<reference key="3">
    <citation type="journal article" date="2004" name="Genome Res.">
        <title>The status, quality, and expansion of the NIH full-length cDNA project: the Mammalian Gene Collection (MGC).</title>
        <authorList>
            <consortium name="The MGC Project Team"/>
        </authorList>
    </citation>
    <scope>NUCLEOTIDE SEQUENCE [LARGE SCALE MRNA] OF 1668-1977</scope>
    <source>
        <strain>FVB/N</strain>
        <tissue>Mammary tumor</tissue>
    </source>
</reference>
<sequence>MAARSAPSCHLRLEWVYGYRGHQCRNNLYYTAAKEIVYFVAGVGVVYSPREHRQKFFRGHSDDIISLALHPERVLVATGQVGKEPYICVWDSYTVQTVSVLKDVHTHGIACLAFDLDGQRLVSVGLDSKNAVCVWDWKRGRMLSMAPGHTDRIFDISWDLYQPNKLVSCGVKHIKFWSLCGNALTPKRGVFGKTGDLQTILCLACARDELTYSGALNGDIYVWKGINLIRTIQGAHTAGIFSMNSCEEGFATGGRDGCIRLWDLTFKPITVIDLRETEQGYKGLSVRSVCWRGDHILVGTQDSEIFEIVVHERNKPFLIMQGHCEGELWALAVHPTKPLAVTGSDDRSVRIWSLVDHALIARCNMEEPIRCAAVNVDGIHLALGMKDGSFTVLRVRDMTEVVHIKDRKEAIHELKYSPDGAYLAVGCNDSSVDIYGVAQRYKKVGECVGSLSFITHLDWSSDSRYLQTNDGSGKRLLYKMPGGKEVTSKEEIKGMHWASWTCVAGLEVNGIWPKYSDINDINSVDGNYVGQVLVTADDYGVVKLFRYPCLRKGAKFRKYIGHSAHVTNVRWSHDYQWVISIGGADHSVFQWKFIPERKLKDALHIAPQESLAESNSDESDSDLSDVPELDSEIEQETQLTYHRQVYKEDLPQLKEQCKEKQKSATSKRRERTPGTSIRLHFIHGYRGYDCRSNLFYTQIGEIVYHVAAVGVIYNRQQNTQRFYLGHDDDILCLAIHPLKDYVATGQVGRDPSIHVWDTETIKPLSILKGYHQYGICAVDFSADGKRLASVGIDDSHTIVLWDWKKGEKLSVTRGSKDKIFVVKMNPYVPDKLITAGIKHMKFWRRAGGGLIGKKGYVGTLGKNDTMMCAVYGWTEEMAFSGTSTGDVCIWRDVFLVKTVKAHDGPVFSMHALEKGFVTGGKDGMVALWDDSFERCLKTYAIKRADLAPGSKGLLLEDNPSIRAISLGHGHILVGTKNGEILEVDKSGPITLLVQGHMEGEVWGLATHPYLPICATVSDDKTLRIWDLSPSHCMLAVRKLKKGGRCCCFSPDGKALAVGLNDGSFLMANADTLEDLVSFHHRKDIISDIRFSPGSGKYLAVASHDSFVDIYNVTSSKRVGVCKGATSYITHIDWDSRGKLLQVNTGAKEQLFFEAPRGKRQTIPSVEVEKISWATWTSVLGLCCEGIWPVIGEVTEVTASCLTSDKMVLATGDDLGFVKLFRYPAKGKFGKFKKYVAHSTHVTNVRWTYDDSMLVTLGGADMSLMVWTNEVESHREKKYCDSEESDIDSEEDGGYDSDVTRENEISYTIRALSTNIRPMFGVKPHLQQKEPSVDERQGVVRGSRPPVSRAPPQPEKLQSNNVGKKKRPIEDLVLELAFGYRGRDCRNNVHYLNDGDDIIYHTASIGILHNVATGTQSFYQEHNDDILCLTVNQHPKFINIVATGQVGDSADMSATAPSVHIWDAVNKQTLSILRCSHSKGVCSVSFSATGKLLLSVGLDPEHTVTIWRWQEGAKIASRGGHNQRIFVAEFRPDSDTQFVSVGIKHVKFWTLAGRALLSKKGLLSSLEDARMQTMLAVAFGANNLTFTGTISGDVCVWKDHILCRVVARAHNGPVFAMYTTLRDGLIVTGGKERPSKEGGAVKLWDQELRRCRAFRLETGQVTDCVRSVCRGKGKILVGTRNSEIIEVGEKNAACNILVNGHVDGPIWGLATHPSRDFFLSAAEDGTVRLWDIADKKMLNKVNLGHAARTVCYSPEGDMVAIGMKNGEFIILLVSSLKIWGKKRDRRCAIHDIRFSPDSRYLAVGSSENSVDFYDLTLGPTLNRISYCKDIPSFVIQMDFSADSRHLQVSSGCYKRHVYEVPSGKHLVDHAAIDRITWATWTSILGDEVMGIWSRHAEKADVTCACVSHSGISLVTGDDFGMVKLYDFPCPEKFAKHKRFLGHSPHVTNIRFTSGDRHVVSAGGDDCSLFVWKCVHMPH</sequence>
<proteinExistence type="evidence at transcript level"/>
<feature type="chain" id="PRO_0000284396" description="Echinoderm microtubule-associated protein-like 5">
    <location>
        <begin position="1"/>
        <end position="1977"/>
    </location>
</feature>
<feature type="repeat" description="WD 1">
    <location>
        <begin position="59"/>
        <end position="100"/>
    </location>
</feature>
<feature type="repeat" description="WD 2">
    <location>
        <begin position="104"/>
        <end position="145"/>
    </location>
</feature>
<feature type="repeat" description="WD 3">
    <location>
        <begin position="148"/>
        <end position="187"/>
    </location>
</feature>
<feature type="repeat" description="WD 4">
    <location>
        <begin position="195"/>
        <end position="233"/>
    </location>
</feature>
<feature type="repeat" description="WD 5">
    <location>
        <begin position="235"/>
        <end position="273"/>
    </location>
</feature>
<feature type="repeat" description="WD 6">
    <location>
        <begin position="280"/>
        <end position="321"/>
    </location>
</feature>
<feature type="repeat" description="WD 7">
    <location>
        <begin position="323"/>
        <end position="362"/>
    </location>
</feature>
<feature type="repeat" description="WD 8">
    <location>
        <begin position="406"/>
        <end position="445"/>
    </location>
</feature>
<feature type="repeat" description="WD 9">
    <location>
        <begin position="449"/>
        <end position="488"/>
    </location>
</feature>
<feature type="repeat" description="WD 10">
    <location>
        <begin position="561"/>
        <end position="601"/>
    </location>
</feature>
<feature type="repeat" description="WD 11">
    <location>
        <begin position="725"/>
        <end position="766"/>
    </location>
</feature>
<feature type="repeat" description="WD 12">
    <location>
        <begin position="770"/>
        <end position="811"/>
    </location>
</feature>
<feature type="repeat" description="WD 13">
    <location>
        <begin position="814"/>
        <end position="853"/>
    </location>
</feature>
<feature type="repeat" description="WD 14">
    <location>
        <begin position="861"/>
        <end position="900"/>
    </location>
</feature>
<feature type="repeat" description="WD 15">
    <location>
        <begin position="901"/>
        <end position="940"/>
    </location>
</feature>
<feature type="repeat" description="WD 16">
    <location>
        <begin position="996"/>
        <end position="1035"/>
    </location>
</feature>
<feature type="repeat" description="WD 17">
    <location>
        <begin position="1038"/>
        <end position="1077"/>
    </location>
</feature>
<feature type="repeat" description="WD 18">
    <location>
        <begin position="1080"/>
        <end position="1120"/>
    </location>
</feature>
<feature type="repeat" description="WD 19">
    <location>
        <begin position="1236"/>
        <end position="1276"/>
    </location>
</feature>
<feature type="repeat" description="WD 20">
    <location>
        <begin position="1420"/>
        <end position="1471"/>
    </location>
</feature>
<feature type="repeat" description="WD 21">
    <location>
        <begin position="1475"/>
        <end position="1516"/>
    </location>
</feature>
<feature type="repeat" description="WD 22">
    <location>
        <begin position="1519"/>
        <end position="1558"/>
    </location>
</feature>
<feature type="repeat" description="WD 23">
    <location>
        <begin position="1568"/>
        <end position="1606"/>
    </location>
</feature>
<feature type="repeat" description="WD 24">
    <location>
        <begin position="1608"/>
        <end position="1654"/>
    </location>
</feature>
<feature type="repeat" description="WD 25">
    <location>
        <begin position="1699"/>
        <end position="1739"/>
    </location>
</feature>
<feature type="repeat" description="WD 26">
    <location>
        <begin position="1741"/>
        <end position="1782"/>
    </location>
</feature>
<feature type="repeat" description="WD 27">
    <location>
        <begin position="1783"/>
        <end position="1822"/>
    </location>
</feature>
<feature type="repeat" description="WD 28">
    <location>
        <begin position="1895"/>
        <end position="1934"/>
    </location>
</feature>
<feature type="repeat" description="WD 29">
    <location>
        <begin position="1940"/>
        <end position="1977"/>
    </location>
</feature>
<feature type="region of interest" description="Disordered" evidence="2">
    <location>
        <begin position="609"/>
        <end position="629"/>
    </location>
</feature>
<feature type="region of interest" description="Disordered" evidence="2">
    <location>
        <begin position="1276"/>
        <end position="1297"/>
    </location>
</feature>
<feature type="region of interest" description="Disordered" evidence="2">
    <location>
        <begin position="1323"/>
        <end position="1363"/>
    </location>
</feature>
<feature type="compositionally biased region" description="Acidic residues" evidence="2">
    <location>
        <begin position="615"/>
        <end position="629"/>
    </location>
</feature>
<feature type="compositionally biased region" description="Acidic residues" evidence="2">
    <location>
        <begin position="1281"/>
        <end position="1294"/>
    </location>
</feature>
<feature type="compositionally biased region" description="Basic and acidic residues" evidence="2">
    <location>
        <begin position="1326"/>
        <end position="1337"/>
    </location>
</feature>
<feature type="sequence conflict" description="In Ref. 2; BAC31743." evidence="3" ref="2">
    <original>RRCRAFRLETGQVTDCVRSVCRGKGKILV</original>
    <variation>GDAGPSGLRQDKSQIVFGLCAEAKARYYL</variation>
    <location>
        <begin position="1648"/>
        <end position="1676"/>
    </location>
</feature>
<feature type="sequence conflict" description="In Ref. 3; AAH27154." evidence="3" ref="3">
    <original>CRGK</original>
    <variation>FVFQ</variation>
    <location>
        <begin position="1668"/>
        <end position="1671"/>
    </location>
</feature>
<gene>
    <name type="primary">Eml5</name>
</gene>
<accession>Q8BQM8</accession>
<accession>Q8BRL0</accession>
<accession>Q8R2W0</accession>
<comment type="function">
    <text evidence="1">May modify the assembly dynamics of microtubules, such that microtubules are slightly longer, but more dynamic.</text>
</comment>
<comment type="subcellular location">
    <subcellularLocation>
        <location evidence="3">Cytoplasm</location>
        <location evidence="3">Cytoskeleton</location>
    </subcellularLocation>
</comment>
<comment type="similarity">
    <text evidence="3">Belongs to the WD repeat EMAP family.</text>
</comment>
<comment type="sequence caution" evidence="3">
    <conflict type="erroneous initiation">
        <sequence resource="EMBL-CDS" id="BAC31743"/>
    </conflict>
</comment>
<comment type="sequence caution" evidence="3">
    <conflict type="erroneous initiation">
        <sequence resource="EMBL-CDS" id="BAC33148"/>
    </conflict>
</comment>
<dbReference type="EMBL" id="AC159193">
    <property type="status" value="NOT_ANNOTATED_CDS"/>
    <property type="molecule type" value="Genomic_DNA"/>
</dbReference>
<dbReference type="EMBL" id="AK044024">
    <property type="protein sequence ID" value="BAC31743.1"/>
    <property type="status" value="ALT_INIT"/>
    <property type="molecule type" value="mRNA"/>
</dbReference>
<dbReference type="EMBL" id="AK047762">
    <property type="protein sequence ID" value="BAC33148.1"/>
    <property type="status" value="ALT_INIT"/>
    <property type="molecule type" value="mRNA"/>
</dbReference>
<dbReference type="EMBL" id="BC027154">
    <property type="protein sequence ID" value="AAH27154.1"/>
    <property type="molecule type" value="mRNA"/>
</dbReference>
<dbReference type="CCDS" id="CCDS36519.1"/>
<dbReference type="RefSeq" id="NP_001074660.1">
    <property type="nucleotide sequence ID" value="NM_001081191.1"/>
</dbReference>
<dbReference type="SMR" id="Q8BQM8"/>
<dbReference type="FunCoup" id="Q8BQM8">
    <property type="interactions" value="135"/>
</dbReference>
<dbReference type="STRING" id="10090.ENSMUSP00000152709"/>
<dbReference type="iPTMnet" id="Q8BQM8"/>
<dbReference type="PhosphoSitePlus" id="Q8BQM8"/>
<dbReference type="PaxDb" id="10090-ENSMUSP00000065643"/>
<dbReference type="ProteomicsDB" id="277831"/>
<dbReference type="Antibodypedia" id="47387">
    <property type="antibodies" value="36 antibodies from 16 providers"/>
</dbReference>
<dbReference type="Ensembl" id="ENSMUST00000223282.2">
    <property type="protein sequence ID" value="ENSMUSP00000152709.2"/>
    <property type="gene ID" value="ENSMUSG00000051166.11"/>
</dbReference>
<dbReference type="GeneID" id="319670"/>
<dbReference type="KEGG" id="mmu:319670"/>
<dbReference type="UCSC" id="uc007orn.1">
    <property type="organism name" value="mouse"/>
</dbReference>
<dbReference type="AGR" id="MGI:2442513"/>
<dbReference type="CTD" id="161436"/>
<dbReference type="MGI" id="MGI:2442513">
    <property type="gene designation" value="Eml5"/>
</dbReference>
<dbReference type="VEuPathDB" id="HostDB:ENSMUSG00000051166"/>
<dbReference type="eggNOG" id="KOG2106">
    <property type="taxonomic scope" value="Eukaryota"/>
</dbReference>
<dbReference type="GeneTree" id="ENSGT00940000156613"/>
<dbReference type="HOGENOM" id="CLU_001930_0_0_1"/>
<dbReference type="InParanoid" id="Q8BQM8"/>
<dbReference type="OMA" id="AVAPCLE"/>
<dbReference type="OrthoDB" id="47802at2759"/>
<dbReference type="PhylomeDB" id="Q8BQM8"/>
<dbReference type="TreeFam" id="TF317832"/>
<dbReference type="BioGRID-ORCS" id="319670">
    <property type="hits" value="2 hits in 75 CRISPR screens"/>
</dbReference>
<dbReference type="ChiTaRS" id="Eml5">
    <property type="organism name" value="mouse"/>
</dbReference>
<dbReference type="PRO" id="PR:Q8BQM8"/>
<dbReference type="Proteomes" id="UP000000589">
    <property type="component" value="Chromosome 12"/>
</dbReference>
<dbReference type="RNAct" id="Q8BQM8">
    <property type="molecule type" value="protein"/>
</dbReference>
<dbReference type="Bgee" id="ENSMUSG00000051166">
    <property type="expression patterns" value="Expressed in retinal neural layer and 241 other cell types or tissues"/>
</dbReference>
<dbReference type="ExpressionAtlas" id="Q8BQM8">
    <property type="expression patterns" value="baseline and differential"/>
</dbReference>
<dbReference type="GO" id="GO:0005737">
    <property type="term" value="C:cytoplasm"/>
    <property type="evidence" value="ECO:0007669"/>
    <property type="project" value="UniProtKB-KW"/>
</dbReference>
<dbReference type="GO" id="GO:0005874">
    <property type="term" value="C:microtubule"/>
    <property type="evidence" value="ECO:0007669"/>
    <property type="project" value="UniProtKB-KW"/>
</dbReference>
<dbReference type="FunFam" id="2.130.10.10:FF:000040">
    <property type="entry name" value="echinoderm microtubule-associated protein-like 6 isoform X1"/>
    <property type="match status" value="1"/>
</dbReference>
<dbReference type="FunFam" id="2.130.10.10:FF:000042">
    <property type="entry name" value="echinoderm microtubule-associated protein-like 6 isoform X1"/>
    <property type="match status" value="1"/>
</dbReference>
<dbReference type="FunFam" id="2.130.10.10:FF:000044">
    <property type="entry name" value="echinoderm microtubule-associated protein-like 6 isoform X1"/>
    <property type="match status" value="1"/>
</dbReference>
<dbReference type="FunFam" id="2.130.10.10:FF:000024">
    <property type="entry name" value="Putative echinoderm microtubule-associated protein-like 6"/>
    <property type="match status" value="1"/>
</dbReference>
<dbReference type="FunFam" id="2.130.10.10:FF:000035">
    <property type="entry name" value="Putative echinoderm microtubule-associated protein-like 6"/>
    <property type="match status" value="1"/>
</dbReference>
<dbReference type="FunFam" id="2.130.10.10:FF:000037">
    <property type="entry name" value="Putative echinoderm microtubule-associated protein-like 6"/>
    <property type="match status" value="1"/>
</dbReference>
<dbReference type="Gene3D" id="2.130.10.10">
    <property type="entry name" value="YVTN repeat-like/Quinoprotein amine dehydrogenase"/>
    <property type="match status" value="6"/>
</dbReference>
<dbReference type="InterPro" id="IPR055442">
    <property type="entry name" value="Beta-prop_EML-like_2nd"/>
</dbReference>
<dbReference type="InterPro" id="IPR055439">
    <property type="entry name" value="Beta-prop_EML_1st"/>
</dbReference>
<dbReference type="InterPro" id="IPR005108">
    <property type="entry name" value="HELP"/>
</dbReference>
<dbReference type="InterPro" id="IPR011047">
    <property type="entry name" value="Quinoprotein_ADH-like_sf"/>
</dbReference>
<dbReference type="InterPro" id="IPR015943">
    <property type="entry name" value="WD40/YVTN_repeat-like_dom_sf"/>
</dbReference>
<dbReference type="InterPro" id="IPR019775">
    <property type="entry name" value="WD40_repeat_CS"/>
</dbReference>
<dbReference type="InterPro" id="IPR036322">
    <property type="entry name" value="WD40_repeat_dom_sf"/>
</dbReference>
<dbReference type="InterPro" id="IPR001680">
    <property type="entry name" value="WD40_rpt"/>
</dbReference>
<dbReference type="InterPro" id="IPR050630">
    <property type="entry name" value="WD_repeat_EMAP"/>
</dbReference>
<dbReference type="PANTHER" id="PTHR13720:SF16">
    <property type="entry name" value="ECHINODERM MICROTUBULE-ASSOCIATED PROTEIN-LIKE 5"/>
    <property type="match status" value="1"/>
</dbReference>
<dbReference type="PANTHER" id="PTHR13720">
    <property type="entry name" value="WD-40 REPEAT PROTEIN"/>
    <property type="match status" value="1"/>
</dbReference>
<dbReference type="Pfam" id="PF23409">
    <property type="entry name" value="Beta-prop_EML"/>
    <property type="match status" value="3"/>
</dbReference>
<dbReference type="Pfam" id="PF23414">
    <property type="entry name" value="Beta-prop_EML_2"/>
    <property type="match status" value="3"/>
</dbReference>
<dbReference type="Pfam" id="PF03451">
    <property type="entry name" value="HELP"/>
    <property type="match status" value="3"/>
</dbReference>
<dbReference type="SMART" id="SM00320">
    <property type="entry name" value="WD40"/>
    <property type="match status" value="29"/>
</dbReference>
<dbReference type="SUPFAM" id="SSF50998">
    <property type="entry name" value="Quinoprotein alcohol dehydrogenase-like"/>
    <property type="match status" value="1"/>
</dbReference>
<dbReference type="SUPFAM" id="SSF50960">
    <property type="entry name" value="TolB, C-terminal domain"/>
    <property type="match status" value="1"/>
</dbReference>
<dbReference type="SUPFAM" id="SSF50978">
    <property type="entry name" value="WD40 repeat-like"/>
    <property type="match status" value="4"/>
</dbReference>
<dbReference type="PROSITE" id="PS00678">
    <property type="entry name" value="WD_REPEATS_1"/>
    <property type="match status" value="1"/>
</dbReference>
<dbReference type="PROSITE" id="PS50082">
    <property type="entry name" value="WD_REPEATS_2"/>
    <property type="match status" value="5"/>
</dbReference>
<dbReference type="PROSITE" id="PS50294">
    <property type="entry name" value="WD_REPEATS_REGION"/>
    <property type="match status" value="6"/>
</dbReference>
<evidence type="ECO:0000250" key="1"/>
<evidence type="ECO:0000256" key="2">
    <source>
        <dbReference type="SAM" id="MobiDB-lite"/>
    </source>
</evidence>
<evidence type="ECO:0000305" key="3"/>